<feature type="chain" id="PRO_0000318920" description="Myelin regulatory factor">
    <location>
        <begin position="1"/>
        <end position="1138"/>
    </location>
</feature>
<feature type="chain" id="PRO_0000424312" description="Myelin regulatory factor, N-terminal" evidence="17">
    <location>
        <begin position="1"/>
        <end position="586"/>
    </location>
</feature>
<feature type="chain" id="PRO_0000424313" description="Myelin regulatory factor, C-terminal" evidence="17">
    <location>
        <begin position="587"/>
        <end position="1138"/>
    </location>
</feature>
<feature type="topological domain" description="Cytoplasmic" evidence="2">
    <location>
        <begin position="1"/>
        <end position="768"/>
    </location>
</feature>
<feature type="transmembrane region" description="Helical" evidence="2">
    <location>
        <begin position="769"/>
        <end position="789"/>
    </location>
</feature>
<feature type="topological domain" description="Lumenal" evidence="2">
    <location>
        <begin position="790"/>
        <end position="1138"/>
    </location>
</feature>
<feature type="domain" description="Peptidase S74" evidence="4">
    <location>
        <begin position="587"/>
        <end position="696"/>
    </location>
</feature>
<feature type="DNA-binding region" description="NDT80" evidence="3">
    <location>
        <begin position="250"/>
        <end position="541"/>
    </location>
</feature>
<feature type="region of interest" description="Disordered" evidence="5">
    <location>
        <begin position="56"/>
        <end position="150"/>
    </location>
</feature>
<feature type="region of interest" description="Disordered" evidence="5">
    <location>
        <begin position="171"/>
        <end position="200"/>
    </location>
</feature>
<feature type="region of interest" description="Disordered" evidence="5">
    <location>
        <begin position="246"/>
        <end position="267"/>
    </location>
</feature>
<feature type="region of interest" description="Disordered" evidence="5">
    <location>
        <begin position="279"/>
        <end position="339"/>
    </location>
</feature>
<feature type="region of interest" description="Disordered" evidence="5">
    <location>
        <begin position="721"/>
        <end position="753"/>
    </location>
</feature>
<feature type="region of interest" description="Required for interaction with TMEM98" evidence="13">
    <location>
        <begin position="765"/>
        <end position="1003"/>
    </location>
</feature>
<feature type="region of interest" description="Disordered" evidence="5">
    <location>
        <begin position="891"/>
        <end position="922"/>
    </location>
</feature>
<feature type="region of interest" description="Disordered" evidence="5">
    <location>
        <begin position="951"/>
        <end position="999"/>
    </location>
</feature>
<feature type="coiled-coil region" evidence="2">
    <location>
        <begin position="680"/>
        <end position="711"/>
    </location>
</feature>
<feature type="short sequence motif" description="Nuclear localization signal" evidence="8">
    <location>
        <begin position="254"/>
        <end position="257"/>
    </location>
</feature>
<feature type="short sequence motif" description="Nuclear localization signal" evidence="8">
    <location>
        <begin position="491"/>
        <end position="494"/>
    </location>
</feature>
<feature type="compositionally biased region" description="Low complexity" evidence="5">
    <location>
        <begin position="67"/>
        <end position="88"/>
    </location>
</feature>
<feature type="compositionally biased region" description="Pro residues" evidence="5">
    <location>
        <begin position="178"/>
        <end position="198"/>
    </location>
</feature>
<feature type="compositionally biased region" description="Pro residues" evidence="5">
    <location>
        <begin position="286"/>
        <end position="302"/>
    </location>
</feature>
<feature type="compositionally biased region" description="Low complexity" evidence="5">
    <location>
        <begin position="329"/>
        <end position="339"/>
    </location>
</feature>
<feature type="compositionally biased region" description="Polar residues" evidence="5">
    <location>
        <begin position="721"/>
        <end position="733"/>
    </location>
</feature>
<feature type="compositionally biased region" description="Low complexity" evidence="5">
    <location>
        <begin position="891"/>
        <end position="900"/>
    </location>
</feature>
<feature type="compositionally biased region" description="Polar residues" evidence="5">
    <location>
        <begin position="961"/>
        <end position="974"/>
    </location>
</feature>
<feature type="compositionally biased region" description="Polar residues" evidence="5">
    <location>
        <begin position="987"/>
        <end position="999"/>
    </location>
</feature>
<feature type="site" description="Cleavage; by autolysis" evidence="4 8">
    <location>
        <begin position="586"/>
        <end position="587"/>
    </location>
</feature>
<feature type="modified residue" description="N6-acetyllysine" evidence="1">
    <location>
        <position position="123"/>
    </location>
</feature>
<feature type="glycosylation site" description="N-linked (GlcNAc...) asparagine" evidence="2">
    <location>
        <position position="1030"/>
    </location>
</feature>
<feature type="glycosylation site" description="N-linked (GlcNAc...) asparagine" evidence="2">
    <location>
        <position position="1052"/>
    </location>
</feature>
<feature type="glycosylation site" description="N-linked (GlcNAc...) asparagine" evidence="2">
    <location>
        <position position="1116"/>
    </location>
</feature>
<feature type="splice variant" id="VSP_053992" description="In isoform 4." evidence="14">
    <location>
        <begin position="46"/>
        <end position="247"/>
    </location>
</feature>
<feature type="splice variant" id="VSP_031303" description="In isoform 2." evidence="15">
    <original>S</original>
    <variation>R</variation>
    <location>
        <position position="779"/>
    </location>
</feature>
<feature type="splice variant" id="VSP_031304" description="In isoform 2." evidence="15">
    <location>
        <begin position="780"/>
        <end position="1138"/>
    </location>
</feature>
<feature type="splice variant" id="VSP_053374" description="In isoform 3." evidence="16">
    <original>SLAVSTSCLLALLRPQDPGGSEAMCPW</original>
    <variation>R</variation>
    <location>
        <begin position="803"/>
        <end position="829"/>
    </location>
</feature>
<feature type="splice variant" id="VSP_053993" description="In isoform 4." evidence="14">
    <original>W</original>
    <variation>CR</variation>
    <location>
        <position position="829"/>
    </location>
</feature>
<feature type="mutagenesis site" description="Abolishes nuclear localization.">
    <original>KKR</original>
    <variation>AAA</variation>
    <location>
        <begin position="254"/>
        <end position="256"/>
    </location>
</feature>
<feature type="mutagenesis site" description="Does not affect subcellular location. Impaired DNA-binding." evidence="11">
    <original>G</original>
    <variation>R</variation>
    <location>
        <position position="384"/>
    </location>
</feature>
<feature type="mutagenesis site" description="Abolishes DNA-binding." evidence="8">
    <original>K</original>
    <variation>A</variation>
    <location>
        <position position="399"/>
    </location>
</feature>
<feature type="mutagenesis site" description="Loss of trimerization; when associated with R-469." evidence="12">
    <location>
        <begin position="439"/>
        <end position="441"/>
    </location>
</feature>
<feature type="mutagenesis site" description="Abolishes DNA-binding." evidence="8">
    <original>R</original>
    <variation>A</variation>
    <location>
        <position position="454"/>
    </location>
</feature>
<feature type="mutagenesis site" description="Loss of trimerization; when associated with 439-E--L-441 DEL." evidence="12">
    <original>E</original>
    <variation>R</variation>
    <location>
        <position position="469"/>
    </location>
</feature>
<feature type="mutagenesis site" description="Abolishes DNA-binding." evidence="8">
    <original>R</original>
    <variation>A</variation>
    <location>
        <position position="478"/>
    </location>
</feature>
<feature type="mutagenesis site" description="Prevents autocatalytic cleavage and generation of Myelin regulatory factor, N-terminal part." evidence="8 12">
    <original>S</original>
    <variation>A</variation>
    <location>
        <position position="587"/>
    </location>
</feature>
<feature type="mutagenesis site" description="Does not affect autocatalytic cleavage and generation of Myelin regulatory factor, N-terminal part." evidence="8">
    <original>S</original>
    <variation>C</variation>
    <location>
        <position position="587"/>
    </location>
</feature>
<feature type="mutagenesis site" description="Prevents autocatalytic cleavage and generation of Myelin regulatory factor, N-terminal part." evidence="8">
    <original>K</original>
    <variation>H</variation>
    <variation>R</variation>
    <variation>M</variation>
    <location>
        <position position="592"/>
    </location>
</feature>
<feature type="sequence conflict" description="In Ref. 3; AAI57943." evidence="16" ref="3">
    <original>K</original>
    <variation>N</variation>
    <location>
        <position position="860"/>
    </location>
</feature>
<feature type="strand" evidence="19">
    <location>
        <begin position="353"/>
        <end position="355"/>
    </location>
</feature>
<feature type="helix" evidence="19">
    <location>
        <begin position="358"/>
        <end position="360"/>
    </location>
</feature>
<feature type="strand" evidence="19">
    <location>
        <begin position="363"/>
        <end position="366"/>
    </location>
</feature>
<feature type="strand" evidence="19">
    <location>
        <begin position="376"/>
        <end position="380"/>
    </location>
</feature>
<feature type="strand" evidence="19">
    <location>
        <begin position="386"/>
        <end position="388"/>
    </location>
</feature>
<feature type="turn" evidence="19">
    <location>
        <begin position="389"/>
        <end position="392"/>
    </location>
</feature>
<feature type="strand" evidence="19">
    <location>
        <begin position="393"/>
        <end position="397"/>
    </location>
</feature>
<feature type="strand" evidence="19">
    <location>
        <begin position="402"/>
        <end position="409"/>
    </location>
</feature>
<feature type="strand" evidence="19">
    <location>
        <begin position="414"/>
        <end position="419"/>
    </location>
</feature>
<feature type="strand" evidence="19">
    <location>
        <begin position="422"/>
        <end position="425"/>
    </location>
</feature>
<feature type="strand" evidence="19">
    <location>
        <begin position="428"/>
        <end position="437"/>
    </location>
</feature>
<feature type="strand" evidence="19">
    <location>
        <begin position="440"/>
        <end position="445"/>
    </location>
</feature>
<feature type="strand" evidence="19">
    <location>
        <begin position="447"/>
        <end position="450"/>
    </location>
</feature>
<feature type="strand" evidence="19">
    <location>
        <begin position="456"/>
        <end position="458"/>
    </location>
</feature>
<feature type="strand" evidence="19">
    <location>
        <begin position="462"/>
        <end position="464"/>
    </location>
</feature>
<feature type="strand" evidence="19">
    <location>
        <begin position="470"/>
        <end position="483"/>
    </location>
</feature>
<feature type="strand" evidence="19">
    <location>
        <begin position="502"/>
        <end position="512"/>
    </location>
</feature>
<feature type="strand" evidence="19">
    <location>
        <begin position="515"/>
        <end position="524"/>
    </location>
</feature>
<feature type="strand" evidence="19">
    <location>
        <begin position="527"/>
        <end position="530"/>
    </location>
</feature>
<feature type="strand" evidence="20">
    <location>
        <begin position="560"/>
        <end position="563"/>
    </location>
</feature>
<feature type="strand" evidence="20">
    <location>
        <begin position="569"/>
        <end position="575"/>
    </location>
</feature>
<feature type="helix" evidence="20">
    <location>
        <begin position="589"/>
        <end position="591"/>
    </location>
</feature>
<feature type="helix" evidence="20">
    <location>
        <begin position="600"/>
        <end position="609"/>
    </location>
</feature>
<feature type="strand" evidence="20">
    <location>
        <begin position="612"/>
        <end position="615"/>
    </location>
</feature>
<feature type="helix" evidence="20">
    <location>
        <begin position="619"/>
        <end position="624"/>
    </location>
</feature>
<feature type="strand" evidence="20">
    <location>
        <begin position="629"/>
        <end position="631"/>
    </location>
</feature>
<feature type="strand" evidence="20">
    <location>
        <begin position="633"/>
        <end position="636"/>
    </location>
</feature>
<feature type="helix" evidence="20">
    <location>
        <begin position="638"/>
        <end position="644"/>
    </location>
</feature>
<feature type="helix" evidence="20">
    <location>
        <begin position="646"/>
        <end position="648"/>
    </location>
</feature>
<feature type="strand" evidence="20">
    <location>
        <begin position="649"/>
        <end position="651"/>
    </location>
</feature>
<feature type="strand" evidence="20">
    <location>
        <begin position="662"/>
        <end position="665"/>
    </location>
</feature>
<feature type="strand" evidence="20">
    <location>
        <begin position="667"/>
        <end position="669"/>
    </location>
</feature>
<feature type="helix" evidence="20">
    <location>
        <begin position="671"/>
        <end position="704"/>
    </location>
</feature>
<accession>Q3UR85</accession>
<accession>B2RXQ7</accession>
<accession>F8WJJ9</accession>
<accession>Q3V3K4</accession>
<protein>
    <recommendedName>
        <fullName>Myelin regulatory factor</fullName>
        <ecNumber evidence="8 12">3.4.-.-</ecNumber>
    </recommendedName>
    <alternativeName>
        <fullName>Myelin gene regulatory factor</fullName>
    </alternativeName>
    <component>
        <recommendedName>
            <fullName>Myelin regulatory factor, N-terminal</fullName>
        </recommendedName>
    </component>
    <component>
        <recommendedName>
            <fullName>Myelin regulatory factor, C-terminal</fullName>
        </recommendedName>
    </component>
</protein>
<name>MYRF_MOUSE</name>
<evidence type="ECO:0000250" key="1">
    <source>
        <dbReference type="UniProtKB" id="Q9Y2G1"/>
    </source>
</evidence>
<evidence type="ECO:0000255" key="2"/>
<evidence type="ECO:0000255" key="3">
    <source>
        <dbReference type="PROSITE-ProRule" id="PRU00850"/>
    </source>
</evidence>
<evidence type="ECO:0000255" key="4">
    <source>
        <dbReference type="PROSITE-ProRule" id="PRU01025"/>
    </source>
</evidence>
<evidence type="ECO:0000256" key="5">
    <source>
        <dbReference type="SAM" id="MobiDB-lite"/>
    </source>
</evidence>
<evidence type="ECO:0000269" key="6">
    <source>
    </source>
</evidence>
<evidence type="ECO:0000269" key="7">
    <source>
    </source>
</evidence>
<evidence type="ECO:0000269" key="8">
    <source>
    </source>
</evidence>
<evidence type="ECO:0000269" key="9">
    <source>
    </source>
</evidence>
<evidence type="ECO:0000269" key="10">
    <source>
    </source>
</evidence>
<evidence type="ECO:0000269" key="11">
    <source>
    </source>
</evidence>
<evidence type="ECO:0000269" key="12">
    <source>
    </source>
</evidence>
<evidence type="ECO:0000269" key="13">
    <source>
    </source>
</evidence>
<evidence type="ECO:0000303" key="14">
    <source>
    </source>
</evidence>
<evidence type="ECO:0000303" key="15">
    <source>
    </source>
</evidence>
<evidence type="ECO:0000305" key="16"/>
<evidence type="ECO:0000305" key="17">
    <source>
    </source>
</evidence>
<evidence type="ECO:0007744" key="18">
    <source>
        <dbReference type="PDB" id="5H5P"/>
    </source>
</evidence>
<evidence type="ECO:0007829" key="19">
    <source>
        <dbReference type="PDB" id="5H5P"/>
    </source>
</evidence>
<evidence type="ECO:0007829" key="20">
    <source>
        <dbReference type="PDB" id="7DC3"/>
    </source>
</evidence>
<organism>
    <name type="scientific">Mus musculus</name>
    <name type="common">Mouse</name>
    <dbReference type="NCBI Taxonomy" id="10090"/>
    <lineage>
        <taxon>Eukaryota</taxon>
        <taxon>Metazoa</taxon>
        <taxon>Chordata</taxon>
        <taxon>Craniata</taxon>
        <taxon>Vertebrata</taxon>
        <taxon>Euteleostomi</taxon>
        <taxon>Mammalia</taxon>
        <taxon>Eutheria</taxon>
        <taxon>Euarchontoglires</taxon>
        <taxon>Glires</taxon>
        <taxon>Rodentia</taxon>
        <taxon>Myomorpha</taxon>
        <taxon>Muroidea</taxon>
        <taxon>Muridae</taxon>
        <taxon>Murinae</taxon>
        <taxon>Mus</taxon>
        <taxon>Mus</taxon>
    </lineage>
</organism>
<keyword id="KW-0002">3D-structure</keyword>
<keyword id="KW-0007">Acetylation</keyword>
<keyword id="KW-0010">Activator</keyword>
<keyword id="KW-0025">Alternative splicing</keyword>
<keyword id="KW-0068">Autocatalytic cleavage</keyword>
<keyword id="KW-0175">Coiled coil</keyword>
<keyword id="KW-0963">Cytoplasm</keyword>
<keyword id="KW-0221">Differentiation</keyword>
<keyword id="KW-0238">DNA-binding</keyword>
<keyword id="KW-0256">Endoplasmic reticulum</keyword>
<keyword id="KW-0325">Glycoprotein</keyword>
<keyword id="KW-0378">Hydrolase</keyword>
<keyword id="KW-0472">Membrane</keyword>
<keyword id="KW-0539">Nucleus</keyword>
<keyword id="KW-0645">Protease</keyword>
<keyword id="KW-1185">Reference proteome</keyword>
<keyword id="KW-0804">Transcription</keyword>
<keyword id="KW-0805">Transcription regulation</keyword>
<keyword id="KW-0812">Transmembrane</keyword>
<keyword id="KW-1133">Transmembrane helix</keyword>
<gene>
    <name type="primary">Myrf</name>
    <name type="synonym">Gm1804</name>
    <name type="synonym">Gm98</name>
    <name type="synonym">Mrf</name>
</gene>
<sequence length="1138" mass="123288">MEVVDETEALQRFFEGHDISGALEPSNIDTSILEEYIGKEDASDLCFPEISAPASTASFPHGPPAIPGSSGLHHLSPPGSGPSPGRHGPLPPPTYGTPLNCNNNNGMGTAPKPFLGGSGPPIKAEPKAPYAPGTLPDSPPDSGSEAYSPQQVNDPHLLRTITPETLCHVGVSSRLEHPPPPPAHLPGPPPPPPPPPHYPVLQRDLYMKAEPPVPPYAAMGPGLVPPELHHTQQTQVLHQLLQQHGAELPPHPSKKRKHSESPPNTLNAQMLNGMIKQEPGTVTALPPHPARAPSPPWPPQGPLSPGTGSLPLSIARAQTPPWHPPGAPSPGLLQDSDSLSGSYLDPNYQSIKWQPHQQNKWATLYDANYKELPMLTYRVDADKGFNFSVGDDAFVCQKKNHFQVTVYIGMLGEPKYVKTPEGLKPLDCFYLKLHGVKLEALNQSINIEQSQSDRSKRPFNPVTVNLPPEQVTKVTVGRLHFSETTANNMRKKGKPNPDQRYFMLVVALQAHAQNQNYTLAAQISERIIVRASNPGQFESDSDVLWQRAQLPDTVFHHGRVGINTDRPDEALVVHGNVKVMGSLMHPSDLRAKEHVQEVDTTEQLKRISRMRLVHYRYKPEFAASAGIEATAPETGVIAQEVKEILPEAVKDTGDVVFANGKTIENFLVVNKERIFMENVGAVKELCKLTDNLETRIDELERWSHKLAKLRRLDSLKSTGSSGAFSHAGSQFSRAGSVPHKKRPPKLANKSSPAVPDQACISQRFLQGTIIALVVVMAFSVVSMSTLYVLSLRSEEDLVDADGSLAVSTSCLLALLRPQDPGGSEAMCPWSSQSFGTTQLRQSSMTTGLPGTQPSLLLVTKSASGPALRALDLCSSQPCPIVCCSPPVSSPATDPALGPTLTPTPSPSSNPKHSGPGQMAPLPVTNIRAKSWGISANGISYSKHSKSLEPLASPVVPFPGGQSKTKNSPSFNLQSRARRGAPQPSPSPAQFTQTQGQLDPAPSLTSIQLLENSMPITSQYCVPEGACRLGNFTYHIPVSSSTPLHLSLTLQMNSSTPVSVVLCSLTSEEEPCEEGGFLQRFHPHQDTQGTSHQWPVTILSFREFTYHFRVTLLGQANCSSEAIVQPATDYYFHFYRLCD</sequence>
<dbReference type="EC" id="3.4.-.-" evidence="8 12"/>
<dbReference type="EMBL" id="AK039649">
    <property type="protein sequence ID" value="BAE20548.1"/>
    <property type="molecule type" value="mRNA"/>
</dbReference>
<dbReference type="EMBL" id="AK141695">
    <property type="protein sequence ID" value="BAE24803.1"/>
    <property type="molecule type" value="mRNA"/>
</dbReference>
<dbReference type="EMBL" id="AC132148">
    <property type="status" value="NOT_ANNOTATED_CDS"/>
    <property type="molecule type" value="Genomic_DNA"/>
</dbReference>
<dbReference type="EMBL" id="BC157942">
    <property type="protein sequence ID" value="AAI57943.1"/>
    <property type="molecule type" value="mRNA"/>
</dbReference>
<dbReference type="CCDS" id="CCDS50387.1">
    <molecule id="Q3UR85-3"/>
</dbReference>
<dbReference type="RefSeq" id="NP_001028653.1">
    <molecule id="Q3UR85-3"/>
    <property type="nucleotide sequence ID" value="NM_001033481.2"/>
</dbReference>
<dbReference type="RefSeq" id="XP_006526992.1">
    <molecule id="Q3UR85-1"/>
    <property type="nucleotide sequence ID" value="XM_006526929.5"/>
</dbReference>
<dbReference type="PDB" id="5H5P">
    <property type="method" value="X-ray"/>
    <property type="resolution" value="2.46 A"/>
    <property type="chains" value="A=351-532"/>
</dbReference>
<dbReference type="PDB" id="7DC3">
    <property type="method" value="X-ray"/>
    <property type="resolution" value="2.40 A"/>
    <property type="chains" value="A/B/C=539-717"/>
</dbReference>
<dbReference type="PDBsum" id="5H5P"/>
<dbReference type="PDBsum" id="7DC3"/>
<dbReference type="SMR" id="Q3UR85"/>
<dbReference type="BioGRID" id="230445">
    <property type="interactions" value="1"/>
</dbReference>
<dbReference type="FunCoup" id="Q3UR85">
    <property type="interactions" value="1740"/>
</dbReference>
<dbReference type="STRING" id="10090.ENSMUSP00000139601"/>
<dbReference type="GlyCosmos" id="Q3UR85">
    <property type="glycosylation" value="3 sites, No reported glycans"/>
</dbReference>
<dbReference type="GlyGen" id="Q3UR85">
    <property type="glycosylation" value="4 sites"/>
</dbReference>
<dbReference type="iPTMnet" id="Q3UR85"/>
<dbReference type="PhosphoSitePlus" id="Q3UR85"/>
<dbReference type="SwissPalm" id="Q3UR85"/>
<dbReference type="CPTAC" id="non-CPTAC-3480"/>
<dbReference type="PaxDb" id="10090-ENSMUSP00000139601"/>
<dbReference type="PeptideAtlas" id="Q3UR85"/>
<dbReference type="ProteomicsDB" id="287540">
    <molecule id="Q3UR85-1"/>
</dbReference>
<dbReference type="ProteomicsDB" id="287541">
    <molecule id="Q3UR85-2"/>
</dbReference>
<dbReference type="ProteomicsDB" id="287542">
    <molecule id="Q3UR85-3"/>
</dbReference>
<dbReference type="ProteomicsDB" id="287543">
    <molecule id="Q3UR85-5"/>
</dbReference>
<dbReference type="Antibodypedia" id="14689">
    <property type="antibodies" value="78 antibodies from 16 providers"/>
</dbReference>
<dbReference type="Ensembl" id="ENSMUST00000088013.12">
    <molecule id="Q3UR85-1"/>
    <property type="protein sequence ID" value="ENSMUSP00000085329.7"/>
    <property type="gene ID" value="ENSMUSG00000036098.16"/>
</dbReference>
<dbReference type="Ensembl" id="ENSMUST00000186056.7">
    <molecule id="Q3UR85-5"/>
    <property type="protein sequence ID" value="ENSMUSP00000140871.2"/>
    <property type="gene ID" value="ENSMUSG00000036098.16"/>
</dbReference>
<dbReference type="Ensembl" id="ENSMUST00000189897.2">
    <molecule id="Q3UR85-3"/>
    <property type="protein sequence ID" value="ENSMUSP00000139601.2"/>
    <property type="gene ID" value="ENSMUSG00000036098.16"/>
</dbReference>
<dbReference type="GeneID" id="225908"/>
<dbReference type="KEGG" id="mmu:225908"/>
<dbReference type="UCSC" id="uc008gpk.2">
    <molecule id="Q3UR85-1"/>
    <property type="organism name" value="mouse"/>
</dbReference>
<dbReference type="UCSC" id="uc012bil.1">
    <molecule id="Q3UR85-3"/>
    <property type="organism name" value="mouse"/>
</dbReference>
<dbReference type="UCSC" id="uc012bim.1">
    <molecule id="Q3UR85-5"/>
    <property type="organism name" value="mouse"/>
</dbReference>
<dbReference type="AGR" id="MGI:2684944"/>
<dbReference type="CTD" id="745"/>
<dbReference type="MGI" id="MGI:2684944">
    <property type="gene designation" value="Myrf"/>
</dbReference>
<dbReference type="VEuPathDB" id="HostDB:ENSMUSG00000036098"/>
<dbReference type="eggNOG" id="KOG3661">
    <property type="taxonomic scope" value="Eukaryota"/>
</dbReference>
<dbReference type="GeneTree" id="ENSGT00530000063626"/>
<dbReference type="HOGENOM" id="CLU_004919_0_0_1"/>
<dbReference type="InParanoid" id="Q3UR85"/>
<dbReference type="OMA" id="LCSSYPC"/>
<dbReference type="OrthoDB" id="27041at2759"/>
<dbReference type="PhylomeDB" id="Q3UR85"/>
<dbReference type="TreeFam" id="TF312888"/>
<dbReference type="BioGRID-ORCS" id="225908">
    <property type="hits" value="2 hits in 77 CRISPR screens"/>
</dbReference>
<dbReference type="ChiTaRS" id="Myrf">
    <property type="organism name" value="mouse"/>
</dbReference>
<dbReference type="PRO" id="PR:Q3UR85"/>
<dbReference type="Proteomes" id="UP000000589">
    <property type="component" value="Chromosome 19"/>
</dbReference>
<dbReference type="RNAct" id="Q3UR85">
    <property type="molecule type" value="protein"/>
</dbReference>
<dbReference type="Bgee" id="ENSMUSG00000036098">
    <property type="expression patterns" value="Expressed in pyloric antrum and 125 other cell types or tissues"/>
</dbReference>
<dbReference type="ExpressionAtlas" id="Q3UR85">
    <property type="expression patterns" value="baseline and differential"/>
</dbReference>
<dbReference type="GO" id="GO:0005737">
    <property type="term" value="C:cytoplasm"/>
    <property type="evidence" value="ECO:0000314"/>
    <property type="project" value="UniProtKB"/>
</dbReference>
<dbReference type="GO" id="GO:0005829">
    <property type="term" value="C:cytosol"/>
    <property type="evidence" value="ECO:0007669"/>
    <property type="project" value="Ensembl"/>
</dbReference>
<dbReference type="GO" id="GO:0005789">
    <property type="term" value="C:endoplasmic reticulum membrane"/>
    <property type="evidence" value="ECO:0000314"/>
    <property type="project" value="UniProtKB"/>
</dbReference>
<dbReference type="GO" id="GO:0005794">
    <property type="term" value="C:Golgi apparatus"/>
    <property type="evidence" value="ECO:0007669"/>
    <property type="project" value="Ensembl"/>
</dbReference>
<dbReference type="GO" id="GO:0005654">
    <property type="term" value="C:nucleoplasm"/>
    <property type="evidence" value="ECO:0007669"/>
    <property type="project" value="Ensembl"/>
</dbReference>
<dbReference type="GO" id="GO:0005634">
    <property type="term" value="C:nucleus"/>
    <property type="evidence" value="ECO:0000314"/>
    <property type="project" value="UniProtKB"/>
</dbReference>
<dbReference type="GO" id="GO:0003700">
    <property type="term" value="F:DNA-binding transcription factor activity"/>
    <property type="evidence" value="ECO:0000304"/>
    <property type="project" value="UniProtKB"/>
</dbReference>
<dbReference type="GO" id="GO:0000981">
    <property type="term" value="F:DNA-binding transcription factor activity, RNA polymerase II-specific"/>
    <property type="evidence" value="ECO:0000314"/>
    <property type="project" value="GO_Central"/>
</dbReference>
<dbReference type="GO" id="GO:0008233">
    <property type="term" value="F:peptidase activity"/>
    <property type="evidence" value="ECO:0007669"/>
    <property type="project" value="UniProtKB-KW"/>
</dbReference>
<dbReference type="GO" id="GO:0043565">
    <property type="term" value="F:sequence-specific DNA binding"/>
    <property type="evidence" value="ECO:0000303"/>
    <property type="project" value="UniProtKB"/>
</dbReference>
<dbReference type="GO" id="GO:0032286">
    <property type="term" value="P:central nervous system myelin maintenance"/>
    <property type="evidence" value="ECO:0000315"/>
    <property type="project" value="UniProtKB"/>
</dbReference>
<dbReference type="GO" id="GO:0022010">
    <property type="term" value="P:central nervous system myelination"/>
    <property type="evidence" value="ECO:0000315"/>
    <property type="project" value="UniProtKB"/>
</dbReference>
<dbReference type="GO" id="GO:0014003">
    <property type="term" value="P:oligodendrocyte development"/>
    <property type="evidence" value="ECO:0000314"/>
    <property type="project" value="GO_Central"/>
</dbReference>
<dbReference type="GO" id="GO:0048709">
    <property type="term" value="P:oligodendrocyte differentiation"/>
    <property type="evidence" value="ECO:0000315"/>
    <property type="project" value="UniProtKB"/>
</dbReference>
<dbReference type="GO" id="GO:0045893">
    <property type="term" value="P:positive regulation of DNA-templated transcription"/>
    <property type="evidence" value="ECO:0000314"/>
    <property type="project" value="UniProtKB"/>
</dbReference>
<dbReference type="GO" id="GO:0031643">
    <property type="term" value="P:positive regulation of myelination"/>
    <property type="evidence" value="ECO:0000315"/>
    <property type="project" value="UniProtKB"/>
</dbReference>
<dbReference type="GO" id="GO:0048714">
    <property type="term" value="P:positive regulation of oligodendrocyte differentiation"/>
    <property type="evidence" value="ECO:0007669"/>
    <property type="project" value="Ensembl"/>
</dbReference>
<dbReference type="GO" id="GO:0016540">
    <property type="term" value="P:protein autoprocessing"/>
    <property type="evidence" value="ECO:0000314"/>
    <property type="project" value="UniProtKB"/>
</dbReference>
<dbReference type="GO" id="GO:0006357">
    <property type="term" value="P:regulation of transcription by RNA polymerase II"/>
    <property type="evidence" value="ECO:0000314"/>
    <property type="project" value="GO_Central"/>
</dbReference>
<dbReference type="GO" id="GO:0042220">
    <property type="term" value="P:response to cocaine"/>
    <property type="evidence" value="ECO:0007669"/>
    <property type="project" value="Ensembl"/>
</dbReference>
<dbReference type="GO" id="GO:0035902">
    <property type="term" value="P:response to immobilization stress"/>
    <property type="evidence" value="ECO:0007669"/>
    <property type="project" value="Ensembl"/>
</dbReference>
<dbReference type="CDD" id="cd10144">
    <property type="entry name" value="Peptidase_S74_CIMCD"/>
    <property type="match status" value="1"/>
</dbReference>
<dbReference type="FunFam" id="2.60.40.1390:FF:000001">
    <property type="entry name" value="Myelin gene regulatory factor"/>
    <property type="match status" value="1"/>
</dbReference>
<dbReference type="FunFam" id="2.60.40.1390:FF:000011">
    <property type="entry name" value="Myelin regulatory factor-like"/>
    <property type="match status" value="1"/>
</dbReference>
<dbReference type="Gene3D" id="2.60.40.1390">
    <property type="entry name" value="NDT80 DNA-binding domain"/>
    <property type="match status" value="1"/>
</dbReference>
<dbReference type="InterPro" id="IPR051577">
    <property type="entry name" value="MRF-like"/>
</dbReference>
<dbReference type="InterPro" id="IPR025719">
    <property type="entry name" value="MYRF_C2"/>
</dbReference>
<dbReference type="InterPro" id="IPR026932">
    <property type="entry name" value="MYRF_ICA"/>
</dbReference>
<dbReference type="InterPro" id="IPR024061">
    <property type="entry name" value="NDT80_DNA-bd_dom"/>
</dbReference>
<dbReference type="InterPro" id="IPR037141">
    <property type="entry name" value="NDT80_DNA-bd_dom_sf"/>
</dbReference>
<dbReference type="InterPro" id="IPR008967">
    <property type="entry name" value="p53-like_TF_DNA-bd_sf"/>
</dbReference>
<dbReference type="InterPro" id="IPR030392">
    <property type="entry name" value="S74_ICA"/>
</dbReference>
<dbReference type="PANTHER" id="PTHR13029">
    <property type="match status" value="1"/>
</dbReference>
<dbReference type="PANTHER" id="PTHR13029:SF16">
    <property type="entry name" value="MYELIN REGULATORY FACTOR"/>
    <property type="match status" value="1"/>
</dbReference>
<dbReference type="Pfam" id="PF13888">
    <property type="entry name" value="MRF_C2"/>
    <property type="match status" value="1"/>
</dbReference>
<dbReference type="Pfam" id="PF13887">
    <property type="entry name" value="MYRF_ICA"/>
    <property type="match status" value="1"/>
</dbReference>
<dbReference type="Pfam" id="PF05224">
    <property type="entry name" value="NDT80_PhoG"/>
    <property type="match status" value="1"/>
</dbReference>
<dbReference type="Pfam" id="PF13884">
    <property type="entry name" value="Peptidase_S74"/>
    <property type="match status" value="1"/>
</dbReference>
<dbReference type="SUPFAM" id="SSF49417">
    <property type="entry name" value="p53-like transcription factors"/>
    <property type="match status" value="1"/>
</dbReference>
<dbReference type="PROSITE" id="PS51688">
    <property type="entry name" value="ICA"/>
    <property type="match status" value="1"/>
</dbReference>
<dbReference type="PROSITE" id="PS51517">
    <property type="entry name" value="NDT80"/>
    <property type="match status" value="1"/>
</dbReference>
<comment type="function">
    <molecule>Myelin regulatory factor</molecule>
    <text evidence="8 12">Constitutes a precursor of the transcription factor. Mediates the autocatalytic cleavage that releases the Myelin regulatory factor, N-terminal component that specifically activates transcription of central nervous system (CNS) myelin genes.</text>
</comment>
<comment type="function">
    <molecule>Myelin regulatory factor, C-terminal</molecule>
    <text evidence="8">Membrane-bound part that has no transcription factor activity and remains attached to the endoplasmic reticulum membrane following cleavage.</text>
</comment>
<comment type="function">
    <molecule>Myelin regulatory factor, N-terminal</molecule>
    <text evidence="6 7 8 9 10">Transcription factor that specifically activates expression of myelin genes such as MBP, MOG, MAG, DUSP15 and PLP1 during oligodendrocyte (OL) maturation, thereby playing a central role in oligodendrocyte maturation and CNS myelination (PubMed:19596243, PubMed:22956843, PubMed:23966833, PubMed:24204311, PubMed:27532821). Specifically recognizes and binds DNA sequence 5'-CTGGYAC-3' in the regulatory regions of myelin-specific genes and directly activates their expression. Not only required during oligodendrocyte differentiation but is also required on an ongoing basis for the maintenance of expression of myelin genes and for the maintenance of a mature, viable oligodendrocyte phenotype (PubMed:19596243, PubMed:22956843, PubMed:23966833).</text>
</comment>
<comment type="subunit">
    <text evidence="8 12 13">Homotrimer (PubMed:23966833, PubMed:28623291). Interacts (via C-terminal region) with TMEM98; the interaction inhibits MYRF self-cleavage (PubMed:30249802).</text>
</comment>
<comment type="subcellular location">
    <molecule>Myelin regulatory factor</molecule>
    <subcellularLocation>
        <location evidence="8 13">Endoplasmic reticulum membrane</location>
        <topology>Single-pass membrane protein</topology>
    </subcellularLocation>
</comment>
<comment type="subcellular location">
    <molecule>Myelin regulatory factor, N-terminal</molecule>
    <subcellularLocation>
        <location evidence="8 11 13">Nucleus</location>
    </subcellularLocation>
    <subcellularLocation>
        <location evidence="8">Cytoplasm</location>
    </subcellularLocation>
    <text evidence="8 13">Translocates from the cytoplasm to the nucleus upon autocatalytic cleavage.</text>
</comment>
<comment type="subcellular location">
    <molecule>Myelin regulatory factor, C-terminal</molecule>
    <subcellularLocation>
        <location evidence="8 13">Endoplasmic reticulum membrane</location>
        <topology evidence="8">Single-pass membrane protein</topology>
    </subcellularLocation>
</comment>
<comment type="alternative products">
    <event type="alternative splicing"/>
    <isoform>
        <id>Q3UR85-1</id>
        <name>1</name>
        <sequence type="displayed"/>
    </isoform>
    <isoform>
        <id>Q3UR85-2</id>
        <name>2</name>
        <sequence type="described" ref="VSP_031303 VSP_031304"/>
    </isoform>
    <isoform>
        <id>Q3UR85-3</id>
        <name>3</name>
        <sequence type="described" ref="VSP_053374"/>
    </isoform>
    <isoform>
        <id>Q3UR85-5</id>
        <name>4</name>
        <sequence type="described" ref="VSP_053992 VSP_053993"/>
    </isoform>
</comment>
<comment type="tissue specificity">
    <text evidence="6 13">Specifically expressed by postmitotic oligodendrocytes in the CNS. Not detected in the peripheral nervous system (PNS).</text>
</comment>
<comment type="developmental stage">
    <text evidence="6">At postnatal day 3 (P3), the expression is restricted to cells in the hindbrain and cerebellum, subsequently spreading rostrally throughout the white matter tracks over the first 2 weeks postnatal, mirroring the expression of Plp1.</text>
</comment>
<comment type="induction">
    <text evidence="9">Expression is directly regulated by SOX10.</text>
</comment>
<comment type="domain">
    <molecule>Myelin regulatory factor, N-terminal</molecule>
    <text evidence="8">The nuclear localization signals mediate translocation to the nucleus.</text>
</comment>
<comment type="domain">
    <molecule>Myelin regulatory factor</molecule>
    <text evidence="8">The peptidase S74 domain, also named Intramolecular Chaperone Auto-processed (ICA) domain or Intramolecular Chaperone Domain (ICD), has protease activity and mediates autocatalytic processing of the protein to generate the Myelin regulatory factor, N-terminal active transcription factor and the Myelin regulatory factor, C-terminal components.</text>
</comment>
<comment type="PTM">
    <molecule>Myelin regulatory factor, C-terminal</molecule>
    <text evidence="1">Glycosylated.</text>
</comment>
<comment type="PTM">
    <molecule>Myelin regulatory factor</molecule>
    <text evidence="8 12 13">Follows autocatalytic cleavage via the peptidase S74 domain. Autoprocessing is apparently constitutive and is essential for transcriptional activity (PubMed:23966833, PubMed:28623291, PubMed:30249802). Autocatalytic cleavage is inhibited by interaction with TMEM98 (PubMed:30249802).</text>
</comment>
<comment type="disruption phenotype">
    <text evidence="6 7">Embryos die around 12.5 dpc. Conditional knockout mice in which Mrf is lacking within the oligodendrocyte lineage display severe deficits in myelin gene expression and premyelinating oligodendrocytes fail to myelinate. These mice display severe neurological abnormalities and die because of seizures during the third postnatal week.</text>
</comment>
<comment type="miscellaneous">
    <molecule>Isoform 2</molecule>
    <text evidence="16">May be produced at very low levels due to a premature stop codon in the mRNA, leading to nonsense-mediated mRNA decay. Dubious isoform due to intron retention.</text>
</comment>
<comment type="similarity">
    <text evidence="16">Belongs to the MRF family.</text>
</comment>
<proteinExistence type="evidence at protein level"/>
<reference key="1">
    <citation type="journal article" date="2005" name="Science">
        <title>The transcriptional landscape of the mammalian genome.</title>
        <authorList>
            <person name="Carninci P."/>
            <person name="Kasukawa T."/>
            <person name="Katayama S."/>
            <person name="Gough J."/>
            <person name="Frith M.C."/>
            <person name="Maeda N."/>
            <person name="Oyama R."/>
            <person name="Ravasi T."/>
            <person name="Lenhard B."/>
            <person name="Wells C."/>
            <person name="Kodzius R."/>
            <person name="Shimokawa K."/>
            <person name="Bajic V.B."/>
            <person name="Brenner S.E."/>
            <person name="Batalov S."/>
            <person name="Forrest A.R."/>
            <person name="Zavolan M."/>
            <person name="Davis M.J."/>
            <person name="Wilming L.G."/>
            <person name="Aidinis V."/>
            <person name="Allen J.E."/>
            <person name="Ambesi-Impiombato A."/>
            <person name="Apweiler R."/>
            <person name="Aturaliya R.N."/>
            <person name="Bailey T.L."/>
            <person name="Bansal M."/>
            <person name="Baxter L."/>
            <person name="Beisel K.W."/>
            <person name="Bersano T."/>
            <person name="Bono H."/>
            <person name="Chalk A.M."/>
            <person name="Chiu K.P."/>
            <person name="Choudhary V."/>
            <person name="Christoffels A."/>
            <person name="Clutterbuck D.R."/>
            <person name="Crowe M.L."/>
            <person name="Dalla E."/>
            <person name="Dalrymple B.P."/>
            <person name="de Bono B."/>
            <person name="Della Gatta G."/>
            <person name="di Bernardo D."/>
            <person name="Down T."/>
            <person name="Engstrom P."/>
            <person name="Fagiolini M."/>
            <person name="Faulkner G."/>
            <person name="Fletcher C.F."/>
            <person name="Fukushima T."/>
            <person name="Furuno M."/>
            <person name="Futaki S."/>
            <person name="Gariboldi M."/>
            <person name="Georgii-Hemming P."/>
            <person name="Gingeras T.R."/>
            <person name="Gojobori T."/>
            <person name="Green R.E."/>
            <person name="Gustincich S."/>
            <person name="Harbers M."/>
            <person name="Hayashi Y."/>
            <person name="Hensch T.K."/>
            <person name="Hirokawa N."/>
            <person name="Hill D."/>
            <person name="Huminiecki L."/>
            <person name="Iacono M."/>
            <person name="Ikeo K."/>
            <person name="Iwama A."/>
            <person name="Ishikawa T."/>
            <person name="Jakt M."/>
            <person name="Kanapin A."/>
            <person name="Katoh M."/>
            <person name="Kawasawa Y."/>
            <person name="Kelso J."/>
            <person name="Kitamura H."/>
            <person name="Kitano H."/>
            <person name="Kollias G."/>
            <person name="Krishnan S.P."/>
            <person name="Kruger A."/>
            <person name="Kummerfeld S.K."/>
            <person name="Kurochkin I.V."/>
            <person name="Lareau L.F."/>
            <person name="Lazarevic D."/>
            <person name="Lipovich L."/>
            <person name="Liu J."/>
            <person name="Liuni S."/>
            <person name="McWilliam S."/>
            <person name="Madan Babu M."/>
            <person name="Madera M."/>
            <person name="Marchionni L."/>
            <person name="Matsuda H."/>
            <person name="Matsuzawa S."/>
            <person name="Miki H."/>
            <person name="Mignone F."/>
            <person name="Miyake S."/>
            <person name="Morris K."/>
            <person name="Mottagui-Tabar S."/>
            <person name="Mulder N."/>
            <person name="Nakano N."/>
            <person name="Nakauchi H."/>
            <person name="Ng P."/>
            <person name="Nilsson R."/>
            <person name="Nishiguchi S."/>
            <person name="Nishikawa S."/>
            <person name="Nori F."/>
            <person name="Ohara O."/>
            <person name="Okazaki Y."/>
            <person name="Orlando V."/>
            <person name="Pang K.C."/>
            <person name="Pavan W.J."/>
            <person name="Pavesi G."/>
            <person name="Pesole G."/>
            <person name="Petrovsky N."/>
            <person name="Piazza S."/>
            <person name="Reed J."/>
            <person name="Reid J.F."/>
            <person name="Ring B.Z."/>
            <person name="Ringwald M."/>
            <person name="Rost B."/>
            <person name="Ruan Y."/>
            <person name="Salzberg S.L."/>
            <person name="Sandelin A."/>
            <person name="Schneider C."/>
            <person name="Schoenbach C."/>
            <person name="Sekiguchi K."/>
            <person name="Semple C.A."/>
            <person name="Seno S."/>
            <person name="Sessa L."/>
            <person name="Sheng Y."/>
            <person name="Shibata Y."/>
            <person name="Shimada H."/>
            <person name="Shimada K."/>
            <person name="Silva D."/>
            <person name="Sinclair B."/>
            <person name="Sperling S."/>
            <person name="Stupka E."/>
            <person name="Sugiura K."/>
            <person name="Sultana R."/>
            <person name="Takenaka Y."/>
            <person name="Taki K."/>
            <person name="Tammoja K."/>
            <person name="Tan S.L."/>
            <person name="Tang S."/>
            <person name="Taylor M.S."/>
            <person name="Tegner J."/>
            <person name="Teichmann S.A."/>
            <person name="Ueda H.R."/>
            <person name="van Nimwegen E."/>
            <person name="Verardo R."/>
            <person name="Wei C.L."/>
            <person name="Yagi K."/>
            <person name="Yamanishi H."/>
            <person name="Zabarovsky E."/>
            <person name="Zhu S."/>
            <person name="Zimmer A."/>
            <person name="Hide W."/>
            <person name="Bult C."/>
            <person name="Grimmond S.M."/>
            <person name="Teasdale R.D."/>
            <person name="Liu E.T."/>
            <person name="Brusic V."/>
            <person name="Quackenbush J."/>
            <person name="Wahlestedt C."/>
            <person name="Mattick J.S."/>
            <person name="Hume D.A."/>
            <person name="Kai C."/>
            <person name="Sasaki D."/>
            <person name="Tomaru Y."/>
            <person name="Fukuda S."/>
            <person name="Kanamori-Katayama M."/>
            <person name="Suzuki M."/>
            <person name="Aoki J."/>
            <person name="Arakawa T."/>
            <person name="Iida J."/>
            <person name="Imamura K."/>
            <person name="Itoh M."/>
            <person name="Kato T."/>
            <person name="Kawaji H."/>
            <person name="Kawagashira N."/>
            <person name="Kawashima T."/>
            <person name="Kojima M."/>
            <person name="Kondo S."/>
            <person name="Konno H."/>
            <person name="Nakano K."/>
            <person name="Ninomiya N."/>
            <person name="Nishio T."/>
            <person name="Okada M."/>
            <person name="Plessy C."/>
            <person name="Shibata K."/>
            <person name="Shiraki T."/>
            <person name="Suzuki S."/>
            <person name="Tagami M."/>
            <person name="Waki K."/>
            <person name="Watahiki A."/>
            <person name="Okamura-Oho Y."/>
            <person name="Suzuki H."/>
            <person name="Kawai J."/>
            <person name="Hayashizaki Y."/>
        </authorList>
    </citation>
    <scope>NUCLEOTIDE SEQUENCE [LARGE SCALE MRNA] (ISOFORM 2)</scope>
    <scope>NUCLEOTIDE SEQUENCE [LARGE SCALE MRNA] OF 525-1138 (ISOFORM 1)</scope>
    <source>
        <strain>C57BL/6J</strain>
        <tissue>Spinal cord</tissue>
    </source>
</reference>
<reference key="2">
    <citation type="journal article" date="2009" name="PLoS Biol.">
        <title>Lineage-specific biology revealed by a finished genome assembly of the mouse.</title>
        <authorList>
            <person name="Church D.M."/>
            <person name="Goodstadt L."/>
            <person name="Hillier L.W."/>
            <person name="Zody M.C."/>
            <person name="Goldstein S."/>
            <person name="She X."/>
            <person name="Bult C.J."/>
            <person name="Agarwala R."/>
            <person name="Cherry J.L."/>
            <person name="DiCuccio M."/>
            <person name="Hlavina W."/>
            <person name="Kapustin Y."/>
            <person name="Meric P."/>
            <person name="Maglott D."/>
            <person name="Birtle Z."/>
            <person name="Marques A.C."/>
            <person name="Graves T."/>
            <person name="Zhou S."/>
            <person name="Teague B."/>
            <person name="Potamousis K."/>
            <person name="Churas C."/>
            <person name="Place M."/>
            <person name="Herschleb J."/>
            <person name="Runnheim R."/>
            <person name="Forrest D."/>
            <person name="Amos-Landgraf J."/>
            <person name="Schwartz D.C."/>
            <person name="Cheng Z."/>
            <person name="Lindblad-Toh K."/>
            <person name="Eichler E.E."/>
            <person name="Ponting C.P."/>
        </authorList>
    </citation>
    <scope>NUCLEOTIDE SEQUENCE [LARGE SCALE GENOMIC DNA]</scope>
    <source>
        <strain>C57BL/6J</strain>
    </source>
</reference>
<reference key="3">
    <citation type="journal article" date="2004" name="Genome Res.">
        <title>The status, quality, and expansion of the NIH full-length cDNA project: the Mammalian Gene Collection (MGC).</title>
        <authorList>
            <consortium name="The MGC Project Team"/>
        </authorList>
    </citation>
    <scope>NUCLEOTIDE SEQUENCE [LARGE SCALE MRNA] (ISOFORM 4)</scope>
    <source>
        <tissue>Brain</tissue>
    </source>
</reference>
<reference key="4">
    <citation type="journal article" date="2009" name="Cell">
        <title>Myelin gene regulatory factor is a critical transcriptional regulator required for CNS myelination.</title>
        <authorList>
            <person name="Emery B."/>
            <person name="Agalliu D."/>
            <person name="Cahoy J.D."/>
            <person name="Watkins T.A."/>
            <person name="Dugas J.C."/>
            <person name="Mulinyawe S.B."/>
            <person name="Ibrahim A."/>
            <person name="Ligon K.L."/>
            <person name="Rowitch D.H."/>
            <person name="Barres B.A."/>
        </authorList>
    </citation>
    <scope>FUNCTION</scope>
    <scope>SUBCELLULAR LOCATION</scope>
    <scope>TISSUE SPECIFICITY</scope>
    <scope>DEVELOPMENTAL STAGE</scope>
    <scope>DISRUPTION PHENOTYPE</scope>
</reference>
<reference key="5">
    <citation type="journal article" date="2012" name="J. Neurosci.">
        <title>Myelin gene regulatory factor is required for maintenance of myelin and mature oligodendrocyte identity in the adult CNS.</title>
        <authorList>
            <person name="Koenning M."/>
            <person name="Jackson S."/>
            <person name="Hay C.M."/>
            <person name="Faux C."/>
            <person name="Kilpatrick T.J."/>
            <person name="Willingham M."/>
            <person name="Emery B."/>
        </authorList>
    </citation>
    <scope>FUNCTION</scope>
    <scope>DISRUPTION PHENOTYPE</scope>
</reference>
<reference key="6">
    <citation type="journal article" date="2013" name="PLoS Biol.">
        <title>MYRF is a membrane-associated transcription factor that autoproteolytically cleaves to directly activate myelin genes.</title>
        <authorList>
            <person name="Bujalka H."/>
            <person name="Koenning M."/>
            <person name="Jackson S."/>
            <person name="Perreau V.M."/>
            <person name="Pope B."/>
            <person name="Hay C.M."/>
            <person name="Mitew S."/>
            <person name="Hill A.F."/>
            <person name="Lu Q.R."/>
            <person name="Wegner M."/>
            <person name="Srinivasan R."/>
            <person name="Svaren J."/>
            <person name="Willingham M."/>
            <person name="Barres B.A."/>
            <person name="Emery B."/>
        </authorList>
    </citation>
    <scope>SUBCELLULAR LOCATION</scope>
    <scope>SUBUNIT</scope>
    <scope>PROTEOLYTIC PROCESSING</scope>
    <scope>CATALYTIC ACTIVITY</scope>
    <scope>DNA-BINDING</scope>
    <scope>MUTAGENESIS OF 254-LYS--ARG-257; LYS-399; ARG-454; ARG-478; SER-587 AND LYS-592</scope>
</reference>
<reference key="7">
    <citation type="journal article" date="2013" name="PLoS Genet.">
        <title>The transcription factors Sox10 and Myrf define an essential regulatory network module in differentiating oligodendrocytes.</title>
        <authorList>
            <person name="Hornig J."/>
            <person name="Froeb F."/>
            <person name="Vogl M.R."/>
            <person name="Hermans-Borgmeyer I."/>
            <person name="Tamm E.R."/>
            <person name="Wegner M."/>
        </authorList>
    </citation>
    <scope>FUNCTION</scope>
    <scope>INDUCTION</scope>
</reference>
<reference key="8">
    <citation type="journal article" date="2016" name="Glia">
        <title>The dual-specificity phosphatase Dusp15 is regulated by Sox10 and Myrf in myelinating oligodendrocytes.</title>
        <authorList>
            <person name="Muth K.N."/>
            <person name="Piefke S."/>
            <person name="Weider M."/>
            <person name="Sock E."/>
            <person name="Hermans-Borgmeyer I."/>
            <person name="Wegner M."/>
            <person name="Kuespert M."/>
        </authorList>
    </citation>
    <scope>FUNCTION</scope>
</reference>
<reference key="9">
    <citation type="journal article" date="2017" name="Dev. Cell">
        <title>Myrf ER-bound transcription factors drive C. elegans synaptic plasticity via cleavage-dependent nuclear translocation.</title>
        <authorList>
            <person name="Meng J."/>
            <person name="Ma X."/>
            <person name="Tao H."/>
            <person name="Jin X."/>
            <person name="Witvliet D."/>
            <person name="Mitchell J."/>
            <person name="Zhu M."/>
            <person name="Dong M.Q."/>
            <person name="Zhen M."/>
            <person name="Jin Y."/>
            <person name="Qi Y.B."/>
        </authorList>
    </citation>
    <scope>SUBCELLULAR LOCATION</scope>
    <scope>MUTAGENESIS OF GLY-384</scope>
</reference>
<reference key="10">
    <citation type="journal article" date="2018" name="J. Neurosci.">
        <title>Interactive Repression of MYRF Self-Cleavage and Activity in Oligodendrocyte Differentiation by TMEM98 Protein.</title>
        <authorList>
            <person name="Huang H."/>
            <person name="Teng P."/>
            <person name="Du J."/>
            <person name="Meng J."/>
            <person name="Hu X."/>
            <person name="Tang T."/>
            <person name="Zhang Z."/>
            <person name="Qi Y.B."/>
            <person name="Qiu M."/>
        </authorList>
    </citation>
    <scope>FUNCTION</scope>
    <scope>TISSUE SPECIFICITY</scope>
    <scope>SUBCELLULAR LOCATION</scope>
    <scope>INTERACTION WITH TMEM98</scope>
    <scope>PROTEOLYTIC PROCESSING</scope>
</reference>
<reference evidence="18" key="11">
    <citation type="journal article" date="2017" name="Sci. Rep.">
        <title>Crystal structure of the DNA-binding domain of Myelin-gene Regulatory Factor.</title>
        <authorList>
            <person name="Zhen X."/>
            <person name="Li B."/>
            <person name="Hu F."/>
            <person name="Yan S."/>
            <person name="Meloni G."/>
            <person name="Li H."/>
            <person name="Shi N."/>
        </authorList>
    </citation>
    <scope>X-RAY CRYSTALLOGRAPHY (2.46 ANGSTROMS) OF 351-532</scope>
    <scope>CATALYTIC ACTIVITY</scope>
    <scope>FUNCTION</scope>
    <scope>PROTEOLYTIC PROCESSING</scope>
    <scope>SUBUNIT</scope>
    <scope>MUTAGENESIS OF 439-GLU--LEU-441; GLU-469 AND SER-587</scope>
</reference>